<name>NAC10_ARATH</name>
<evidence type="ECO:0000255" key="1">
    <source>
        <dbReference type="PROSITE-ProRule" id="PRU00353"/>
    </source>
</evidence>
<evidence type="ECO:0000256" key="2">
    <source>
        <dbReference type="SAM" id="MobiDB-lite"/>
    </source>
</evidence>
<evidence type="ECO:0000269" key="3">
    <source>
    </source>
</evidence>
<evidence type="ECO:0000303" key="4">
    <source>
    </source>
</evidence>
<evidence type="ECO:0000303" key="5">
    <source>
    </source>
</evidence>
<evidence type="ECO:0000305" key="6"/>
<evidence type="ECO:0000312" key="7">
    <source>
        <dbReference type="Araport" id="AT1G28470"/>
    </source>
</evidence>
<evidence type="ECO:0000312" key="8">
    <source>
        <dbReference type="EMBL" id="AAF16767.1"/>
    </source>
</evidence>
<evidence type="ECO:0000312" key="9">
    <source>
        <dbReference type="EMBL" id="AEE30980.1"/>
    </source>
</evidence>
<keyword id="KW-0010">Activator</keyword>
<keyword id="KW-0238">DNA-binding</keyword>
<keyword id="KW-0539">Nucleus</keyword>
<keyword id="KW-1185">Reference proteome</keyword>
<keyword id="KW-0804">Transcription</keyword>
<keyword id="KW-0805">Transcription regulation</keyword>
<feature type="chain" id="PRO_0000432421" description="NAC domain-containing protein 10">
    <location>
        <begin position="1"/>
        <end position="314"/>
    </location>
</feature>
<feature type="domain" description="NAC" evidence="1">
    <location>
        <begin position="77"/>
        <end position="236"/>
    </location>
</feature>
<feature type="DNA-binding region" evidence="1">
    <location>
        <begin position="187"/>
        <end position="242"/>
    </location>
</feature>
<feature type="region of interest" description="Disordered" evidence="2">
    <location>
        <begin position="18"/>
        <end position="48"/>
    </location>
</feature>
<feature type="region of interest" description="Disordered" evidence="2">
    <location>
        <begin position="150"/>
        <end position="182"/>
    </location>
</feature>
<feature type="compositionally biased region" description="Polar residues" evidence="2">
    <location>
        <begin position="18"/>
        <end position="39"/>
    </location>
</feature>
<feature type="compositionally biased region" description="Basic and acidic residues" evidence="2">
    <location>
        <begin position="160"/>
        <end position="171"/>
    </location>
</feature>
<feature type="sequence conflict" description="In Ref. 3; AAM63478." evidence="6" ref="3">
    <original>T</original>
    <variation>S</variation>
    <location>
        <position position="52"/>
    </location>
</feature>
<feature type="sequence conflict" description="In Ref. 3; AAM63478." evidence="6" ref="3">
    <original>S</original>
    <variation>R</variation>
    <location>
        <position position="259"/>
    </location>
</feature>
<dbReference type="EMBL" id="AC010155">
    <property type="protein sequence ID" value="AAF16767.1"/>
    <property type="status" value="ALT_SEQ"/>
    <property type="molecule type" value="Genomic_DNA"/>
</dbReference>
<dbReference type="EMBL" id="CP002684">
    <property type="protein sequence ID" value="AEE30980.1"/>
    <property type="molecule type" value="Genomic_DNA"/>
</dbReference>
<dbReference type="EMBL" id="AY086476">
    <property type="protein sequence ID" value="AAM63478.1"/>
    <property type="molecule type" value="mRNA"/>
</dbReference>
<dbReference type="EMBL" id="AK118170">
    <property type="protein sequence ID" value="BAC42793.1"/>
    <property type="status" value="ALT_INIT"/>
    <property type="molecule type" value="mRNA"/>
</dbReference>
<dbReference type="RefSeq" id="NP_564309.1">
    <property type="nucleotide sequence ID" value="NM_102615.3"/>
</dbReference>
<dbReference type="SMR" id="F4HY61"/>
<dbReference type="FunCoup" id="F4HY61">
    <property type="interactions" value="1"/>
</dbReference>
<dbReference type="IntAct" id="F4HY61">
    <property type="interactions" value="2"/>
</dbReference>
<dbReference type="STRING" id="3702.F4HY61"/>
<dbReference type="PaxDb" id="3702-AT1G28470.1"/>
<dbReference type="ProteomicsDB" id="251194"/>
<dbReference type="DNASU" id="839747"/>
<dbReference type="EnsemblPlants" id="AT1G28470.1">
    <property type="protein sequence ID" value="AT1G28470.1"/>
    <property type="gene ID" value="AT1G28470"/>
</dbReference>
<dbReference type="GeneID" id="839747"/>
<dbReference type="Gramene" id="AT1G28470.1">
    <property type="protein sequence ID" value="AT1G28470.1"/>
    <property type="gene ID" value="AT1G28470"/>
</dbReference>
<dbReference type="KEGG" id="ath:AT1G28470"/>
<dbReference type="Araport" id="AT1G28470"/>
<dbReference type="TAIR" id="AT1G28470">
    <property type="gene designation" value="NAC010"/>
</dbReference>
<dbReference type="eggNOG" id="ENOG502QR2Y">
    <property type="taxonomic scope" value="Eukaryota"/>
</dbReference>
<dbReference type="HOGENOM" id="CLU_025101_1_0_1"/>
<dbReference type="InParanoid" id="F4HY61"/>
<dbReference type="OMA" id="FGYEHGG"/>
<dbReference type="PRO" id="PR:F4HY61"/>
<dbReference type="Proteomes" id="UP000006548">
    <property type="component" value="Chromosome 1"/>
</dbReference>
<dbReference type="ExpressionAtlas" id="F4HY61">
    <property type="expression patterns" value="baseline and differential"/>
</dbReference>
<dbReference type="GO" id="GO:0005634">
    <property type="term" value="C:nucleus"/>
    <property type="evidence" value="ECO:0000314"/>
    <property type="project" value="TAIR"/>
</dbReference>
<dbReference type="GO" id="GO:0003700">
    <property type="term" value="F:DNA-binding transcription factor activity"/>
    <property type="evidence" value="ECO:0000250"/>
    <property type="project" value="TAIR"/>
</dbReference>
<dbReference type="GO" id="GO:0000976">
    <property type="term" value="F:transcription cis-regulatory region binding"/>
    <property type="evidence" value="ECO:0000353"/>
    <property type="project" value="TAIR"/>
</dbReference>
<dbReference type="GO" id="GO:0045893">
    <property type="term" value="P:positive regulation of DNA-templated transcription"/>
    <property type="evidence" value="ECO:0000314"/>
    <property type="project" value="TAIR"/>
</dbReference>
<dbReference type="GO" id="GO:2000652">
    <property type="term" value="P:regulation of secondary cell wall biogenesis"/>
    <property type="evidence" value="ECO:0000315"/>
    <property type="project" value="TAIR"/>
</dbReference>
<dbReference type="FunFam" id="2.170.150.80:FF:000001">
    <property type="entry name" value="NAC domain-containing protein 73"/>
    <property type="match status" value="1"/>
</dbReference>
<dbReference type="Gene3D" id="2.170.150.80">
    <property type="entry name" value="NAC domain"/>
    <property type="match status" value="1"/>
</dbReference>
<dbReference type="InterPro" id="IPR003441">
    <property type="entry name" value="NAC-dom"/>
</dbReference>
<dbReference type="InterPro" id="IPR036093">
    <property type="entry name" value="NAC_dom_sf"/>
</dbReference>
<dbReference type="InterPro" id="IPR044799">
    <property type="entry name" value="SOG1-like"/>
</dbReference>
<dbReference type="PANTHER" id="PTHR31079:SF20">
    <property type="entry name" value="NAC DOMAIN-CONTAINING PROTEIN 10"/>
    <property type="match status" value="1"/>
</dbReference>
<dbReference type="PANTHER" id="PTHR31079">
    <property type="entry name" value="NAC DOMAIN-CONTAINING PROTEIN 73"/>
    <property type="match status" value="1"/>
</dbReference>
<dbReference type="Pfam" id="PF02365">
    <property type="entry name" value="NAM"/>
    <property type="match status" value="1"/>
</dbReference>
<dbReference type="SUPFAM" id="SSF101941">
    <property type="entry name" value="NAC domain"/>
    <property type="match status" value="1"/>
</dbReference>
<dbReference type="PROSITE" id="PS51005">
    <property type="entry name" value="NAC"/>
    <property type="match status" value="1"/>
</dbReference>
<reference key="1">
    <citation type="journal article" date="2000" name="Nature">
        <title>Sequence and analysis of chromosome 1 of the plant Arabidopsis thaliana.</title>
        <authorList>
            <person name="Theologis A."/>
            <person name="Ecker J.R."/>
            <person name="Palm C.J."/>
            <person name="Federspiel N.A."/>
            <person name="Kaul S."/>
            <person name="White O."/>
            <person name="Alonso J."/>
            <person name="Altafi H."/>
            <person name="Araujo R."/>
            <person name="Bowman C.L."/>
            <person name="Brooks S.Y."/>
            <person name="Buehler E."/>
            <person name="Chan A."/>
            <person name="Chao Q."/>
            <person name="Chen H."/>
            <person name="Cheuk R.F."/>
            <person name="Chin C.W."/>
            <person name="Chung M.K."/>
            <person name="Conn L."/>
            <person name="Conway A.B."/>
            <person name="Conway A.R."/>
            <person name="Creasy T.H."/>
            <person name="Dewar K."/>
            <person name="Dunn P."/>
            <person name="Etgu P."/>
            <person name="Feldblyum T.V."/>
            <person name="Feng J.-D."/>
            <person name="Fong B."/>
            <person name="Fujii C.Y."/>
            <person name="Gill J.E."/>
            <person name="Goldsmith A.D."/>
            <person name="Haas B."/>
            <person name="Hansen N.F."/>
            <person name="Hughes B."/>
            <person name="Huizar L."/>
            <person name="Hunter J.L."/>
            <person name="Jenkins J."/>
            <person name="Johnson-Hopson C."/>
            <person name="Khan S."/>
            <person name="Khaykin E."/>
            <person name="Kim C.J."/>
            <person name="Koo H.L."/>
            <person name="Kremenetskaia I."/>
            <person name="Kurtz D.B."/>
            <person name="Kwan A."/>
            <person name="Lam B."/>
            <person name="Langin-Hooper S."/>
            <person name="Lee A."/>
            <person name="Lee J.M."/>
            <person name="Lenz C.A."/>
            <person name="Li J.H."/>
            <person name="Li Y.-P."/>
            <person name="Lin X."/>
            <person name="Liu S.X."/>
            <person name="Liu Z.A."/>
            <person name="Luros J.S."/>
            <person name="Maiti R."/>
            <person name="Marziali A."/>
            <person name="Militscher J."/>
            <person name="Miranda M."/>
            <person name="Nguyen M."/>
            <person name="Nierman W.C."/>
            <person name="Osborne B.I."/>
            <person name="Pai G."/>
            <person name="Peterson J."/>
            <person name="Pham P.K."/>
            <person name="Rizzo M."/>
            <person name="Rooney T."/>
            <person name="Rowley D."/>
            <person name="Sakano H."/>
            <person name="Salzberg S.L."/>
            <person name="Schwartz J.R."/>
            <person name="Shinn P."/>
            <person name="Southwick A.M."/>
            <person name="Sun H."/>
            <person name="Tallon L.J."/>
            <person name="Tambunga G."/>
            <person name="Toriumi M.J."/>
            <person name="Town C.D."/>
            <person name="Utterback T."/>
            <person name="Van Aken S."/>
            <person name="Vaysberg M."/>
            <person name="Vysotskaia V.S."/>
            <person name="Walker M."/>
            <person name="Wu D."/>
            <person name="Yu G."/>
            <person name="Fraser C.M."/>
            <person name="Venter J.C."/>
            <person name="Davis R.W."/>
        </authorList>
    </citation>
    <scope>NUCLEOTIDE SEQUENCE [LARGE SCALE GENOMIC DNA]</scope>
    <source>
        <strain>cv. Columbia</strain>
    </source>
</reference>
<reference key="2">
    <citation type="journal article" date="2017" name="Plant J.">
        <title>Araport11: a complete reannotation of the Arabidopsis thaliana reference genome.</title>
        <authorList>
            <person name="Cheng C.Y."/>
            <person name="Krishnakumar V."/>
            <person name="Chan A.P."/>
            <person name="Thibaud-Nissen F."/>
            <person name="Schobel S."/>
            <person name="Town C.D."/>
        </authorList>
    </citation>
    <scope>GENOME REANNOTATION</scope>
    <source>
        <strain>cv. Columbia</strain>
    </source>
</reference>
<reference key="3">
    <citation type="submission" date="2002-03" db="EMBL/GenBank/DDBJ databases">
        <title>Full-length cDNA from Arabidopsis thaliana.</title>
        <authorList>
            <person name="Brover V.V."/>
            <person name="Troukhan M.E."/>
            <person name="Alexandrov N.A."/>
            <person name="Lu Y.-P."/>
            <person name="Flavell R.B."/>
            <person name="Feldmann K.A."/>
        </authorList>
    </citation>
    <scope>NUCLEOTIDE SEQUENCE [LARGE SCALE MRNA]</scope>
</reference>
<reference key="4">
    <citation type="journal article" date="2002" name="Science">
        <title>Functional annotation of a full-length Arabidopsis cDNA collection.</title>
        <authorList>
            <person name="Seki M."/>
            <person name="Narusaka M."/>
            <person name="Kamiya A."/>
            <person name="Ishida J."/>
            <person name="Satou M."/>
            <person name="Sakurai T."/>
            <person name="Nakajima M."/>
            <person name="Enju A."/>
            <person name="Akiyama K."/>
            <person name="Oono Y."/>
            <person name="Muramatsu M."/>
            <person name="Hayashizaki Y."/>
            <person name="Kawai J."/>
            <person name="Carninci P."/>
            <person name="Itoh M."/>
            <person name="Ishii Y."/>
            <person name="Arakawa T."/>
            <person name="Shibata K."/>
            <person name="Shinagawa A."/>
            <person name="Shinozaki K."/>
        </authorList>
    </citation>
    <scope>NUCLEOTIDE SEQUENCE [LARGE SCALE MRNA] OF 148-314</scope>
    <source>
        <strain>cv. Columbia</strain>
    </source>
</reference>
<reference key="5">
    <citation type="journal article" date="2003" name="DNA Res.">
        <title>Comprehensive analysis of NAC family genes in Oryza sativa and Arabidopsis thaliana.</title>
        <authorList>
            <person name="Ooka H."/>
            <person name="Satoh K."/>
            <person name="Doi K."/>
            <person name="Nagata T."/>
            <person name="Otomo Y."/>
            <person name="Murakami K."/>
            <person name="Matsubara K."/>
            <person name="Osato N."/>
            <person name="Kawai J."/>
            <person name="Carninci P."/>
            <person name="Hayashizaki Y."/>
            <person name="Suzuki K."/>
            <person name="Kojima K."/>
            <person name="Takahara Y."/>
            <person name="Yamamoto K."/>
            <person name="Kikuchi S."/>
        </authorList>
    </citation>
    <scope>GENE FAMILY</scope>
    <scope>NOMENCLATURE</scope>
</reference>
<reference key="6">
    <citation type="journal article" date="2008" name="Plant Cell">
        <title>A battery of transcription factors involved in the regulation of secondary cell wall biosynthesis in Arabidopsis.</title>
        <authorList>
            <person name="Zhong R."/>
            <person name="Lee C."/>
            <person name="Zhou J."/>
            <person name="McCarthy R.L."/>
            <person name="Ye Z.H."/>
        </authorList>
    </citation>
    <scope>FUNCTION</scope>
    <scope>SUBCELLULAR LOCATION</scope>
    <scope>TISSUE SPECIFICITY</scope>
</reference>
<sequence>MSWCDGSDDNYDLNLERVSNTDHPSVQLKDQSQSCVTSRPDSKISAETPITTCPSCGHKLHHHQDDQVGSIKDLPSLPAGVKFDPSDKEILMHLEAKVSSDKRKLHPLIDEFIPTLEGENGICYTHPEKLPGVSKDGQVRHFFHRPSKAYTTGTRKRRKVSTDEEGHETRWHKTGKTRPVLSQSGETGFKKILVLYTNYGRQKKPEKTNWVMHQYHLGSSEDEKDGEPVLSKVFYQTQPRQCGSMEPKPKNLVNLNRFSYENIQAGFGYEHGGKSEETTQVIRELVVREGDGSCSFLSFTCDASKGKESFMKNQ</sequence>
<accession>F4HY61</accession>
<accession>Q8GXL6</accession>
<accession>Q8LCP5</accession>
<accession>Q9SGP5</accession>
<comment type="function">
    <text evidence="3">Transcriptional activator that plays a regulatory role in the development of secondary cell wall fibers. Is a direct target of SND1.</text>
</comment>
<comment type="subcellular location">
    <subcellularLocation>
        <location evidence="1 3">Nucleus</location>
    </subcellularLocation>
</comment>
<comment type="tissue specificity">
    <text evidence="3">Expressed in protoxylem and elongating interfascicular fiber cells of elongating internodes, developing metaxylem cells and interfascicular fibers of non-elongating internodes and developing secondary xylem of roots.</text>
</comment>
<comment type="domain">
    <text evidence="1">The NAC domain includes a DNA binding domain and a dimerization domain.</text>
</comment>
<comment type="sequence caution" evidence="6">
    <conflict type="erroneous gene model prediction">
        <sequence resource="EMBL-CDS" id="AAF16767"/>
    </conflict>
</comment>
<comment type="sequence caution" evidence="6">
    <conflict type="erroneous initiation">
        <sequence resource="EMBL-CDS" id="BAC42793"/>
    </conflict>
    <text>Truncated N-terminus.</text>
</comment>
<gene>
    <name evidence="9" type="primary">NAC010</name>
    <name evidence="5" type="synonym">SND3</name>
    <name evidence="7" type="ordered locus">At1g28470</name>
    <name evidence="8" type="ORF">F3M18.9</name>
</gene>
<organism>
    <name type="scientific">Arabidopsis thaliana</name>
    <name type="common">Mouse-ear cress</name>
    <dbReference type="NCBI Taxonomy" id="3702"/>
    <lineage>
        <taxon>Eukaryota</taxon>
        <taxon>Viridiplantae</taxon>
        <taxon>Streptophyta</taxon>
        <taxon>Embryophyta</taxon>
        <taxon>Tracheophyta</taxon>
        <taxon>Spermatophyta</taxon>
        <taxon>Magnoliopsida</taxon>
        <taxon>eudicotyledons</taxon>
        <taxon>Gunneridae</taxon>
        <taxon>Pentapetalae</taxon>
        <taxon>rosids</taxon>
        <taxon>malvids</taxon>
        <taxon>Brassicales</taxon>
        <taxon>Brassicaceae</taxon>
        <taxon>Camelineae</taxon>
        <taxon>Arabidopsis</taxon>
    </lineage>
</organism>
<protein>
    <recommendedName>
        <fullName evidence="4">NAC domain-containing protein 10</fullName>
        <shortName evidence="4">ANAC010</shortName>
    </recommendedName>
    <alternativeName>
        <fullName evidence="5">Protein SECONDARY WALL-ASSOCIATED NAC DOMAIN PROTEIN 3</fullName>
    </alternativeName>
</protein>
<proteinExistence type="evidence at transcript level"/>